<evidence type="ECO:0000255" key="1">
    <source>
        <dbReference type="HAMAP-Rule" id="MF_00255"/>
    </source>
</evidence>
<protein>
    <recommendedName>
        <fullName evidence="1">Glycine--tRNA ligase beta subunit</fullName>
        <ecNumber evidence="1">6.1.1.14</ecNumber>
    </recommendedName>
    <alternativeName>
        <fullName evidence="1">Glycyl-tRNA synthetase beta subunit</fullName>
        <shortName evidence="1">GlyRS</shortName>
    </alternativeName>
</protein>
<proteinExistence type="inferred from homology"/>
<organism>
    <name type="scientific">Nitrosomonas europaea (strain ATCC 19718 / CIP 103999 / KCTC 2705 / NBRC 14298)</name>
    <dbReference type="NCBI Taxonomy" id="228410"/>
    <lineage>
        <taxon>Bacteria</taxon>
        <taxon>Pseudomonadati</taxon>
        <taxon>Pseudomonadota</taxon>
        <taxon>Betaproteobacteria</taxon>
        <taxon>Nitrosomonadales</taxon>
        <taxon>Nitrosomonadaceae</taxon>
        <taxon>Nitrosomonas</taxon>
    </lineage>
</organism>
<keyword id="KW-0030">Aminoacyl-tRNA synthetase</keyword>
<keyword id="KW-0067">ATP-binding</keyword>
<keyword id="KW-0963">Cytoplasm</keyword>
<keyword id="KW-0436">Ligase</keyword>
<keyword id="KW-0547">Nucleotide-binding</keyword>
<keyword id="KW-0648">Protein biosynthesis</keyword>
<keyword id="KW-1185">Reference proteome</keyword>
<gene>
    <name evidence="1" type="primary">glyS</name>
    <name type="ordered locus">NE1186</name>
</gene>
<name>SYGB_NITEU</name>
<feature type="chain" id="PRO_1000101311" description="Glycine--tRNA ligase beta subunit">
    <location>
        <begin position="1"/>
        <end position="715"/>
    </location>
</feature>
<sequence length="715" mass="78442">MMIENLLIELLTEELPPKSLDKLGNAFAAVIADSLKSQNLTTPDTILTAFASPRRLAVHLTAIPAQAPDQVVALKLMPITVGLDAQGQPTPALHKKLAALGMENVDASALKRVQESKAEMLFLEQNVTGILLAAGLQKAMEDAIRQLPVSKVMTYQLDDGWENVHFVRPVHGLIALHGQKIIPVSAFGLTAGNTTRGHRFEVKQTELIIDHADRYASLLETEGAVIPGFDRRRSWIREGLEAAASAVQLRCISDEVLLDEVTALVEYPNILMGAFPTDFLEVPQECLISTMKINQKYFPLLDTDGKLTNQFLIVANITPADPGQIISGNERVIRSRLADAKFFFDHDRKRTLASRLPDLDKVIYHHQLGSQGERTRYVQTLARIIGRLLGDDNLAGQADQAAMLAKADLLTDMVGEFPELQGIMGRYYARFEGMDETIAFAIEDHYKPRFAGDVLPRSMAGICVALADKLETLISLFSIGQLPTGDKDPYALRRHALGVIRILIEKNLPIGLDVLISRAADVLQDEMIGKQDSGPGHARPVTPQLVGQLQDFFYDRLAASLRDQGYTAQEVEAVLNLRPSLLCEIPRRLAAVRAFAALPEAASLAAANKRVGNILKKSECDATVAIDEACLQASAEITLYRALSEIESDARQAFQNGDYVTALQILAALKAPVDAFFDQVMVNDENEALRRNRLALLMALQATMNRVADISRLAA</sequence>
<comment type="catalytic activity">
    <reaction evidence="1">
        <text>tRNA(Gly) + glycine + ATP = glycyl-tRNA(Gly) + AMP + diphosphate</text>
        <dbReference type="Rhea" id="RHEA:16013"/>
        <dbReference type="Rhea" id="RHEA-COMP:9664"/>
        <dbReference type="Rhea" id="RHEA-COMP:9683"/>
        <dbReference type="ChEBI" id="CHEBI:30616"/>
        <dbReference type="ChEBI" id="CHEBI:33019"/>
        <dbReference type="ChEBI" id="CHEBI:57305"/>
        <dbReference type="ChEBI" id="CHEBI:78442"/>
        <dbReference type="ChEBI" id="CHEBI:78522"/>
        <dbReference type="ChEBI" id="CHEBI:456215"/>
        <dbReference type="EC" id="6.1.1.14"/>
    </reaction>
</comment>
<comment type="subunit">
    <text evidence="1">Tetramer of two alpha and two beta subunits.</text>
</comment>
<comment type="subcellular location">
    <subcellularLocation>
        <location evidence="1">Cytoplasm</location>
    </subcellularLocation>
</comment>
<comment type="similarity">
    <text evidence="1">Belongs to the class-II aminoacyl-tRNA synthetase family.</text>
</comment>
<dbReference type="EC" id="6.1.1.14" evidence="1"/>
<dbReference type="EMBL" id="AL954747">
    <property type="protein sequence ID" value="CAD85097.1"/>
    <property type="molecule type" value="Genomic_DNA"/>
</dbReference>
<dbReference type="SMR" id="Q82VB0"/>
<dbReference type="STRING" id="228410.NE1186"/>
<dbReference type="KEGG" id="neu:NE1186"/>
<dbReference type="eggNOG" id="COG0751">
    <property type="taxonomic scope" value="Bacteria"/>
</dbReference>
<dbReference type="HOGENOM" id="CLU_007220_2_2_4"/>
<dbReference type="PhylomeDB" id="Q82VB0"/>
<dbReference type="Proteomes" id="UP000001416">
    <property type="component" value="Chromosome"/>
</dbReference>
<dbReference type="GO" id="GO:0005829">
    <property type="term" value="C:cytosol"/>
    <property type="evidence" value="ECO:0007669"/>
    <property type="project" value="TreeGrafter"/>
</dbReference>
<dbReference type="GO" id="GO:0004814">
    <property type="term" value="F:arginine-tRNA ligase activity"/>
    <property type="evidence" value="ECO:0007669"/>
    <property type="project" value="InterPro"/>
</dbReference>
<dbReference type="GO" id="GO:0005524">
    <property type="term" value="F:ATP binding"/>
    <property type="evidence" value="ECO:0007669"/>
    <property type="project" value="UniProtKB-UniRule"/>
</dbReference>
<dbReference type="GO" id="GO:0004820">
    <property type="term" value="F:glycine-tRNA ligase activity"/>
    <property type="evidence" value="ECO:0007669"/>
    <property type="project" value="UniProtKB-UniRule"/>
</dbReference>
<dbReference type="GO" id="GO:0006420">
    <property type="term" value="P:arginyl-tRNA aminoacylation"/>
    <property type="evidence" value="ECO:0007669"/>
    <property type="project" value="InterPro"/>
</dbReference>
<dbReference type="GO" id="GO:0006426">
    <property type="term" value="P:glycyl-tRNA aminoacylation"/>
    <property type="evidence" value="ECO:0007669"/>
    <property type="project" value="UniProtKB-UniRule"/>
</dbReference>
<dbReference type="Gene3D" id="1.10.730.10">
    <property type="entry name" value="Isoleucyl-tRNA Synthetase, Domain 1"/>
    <property type="match status" value="1"/>
</dbReference>
<dbReference type="HAMAP" id="MF_00255">
    <property type="entry name" value="Gly_tRNA_synth_beta"/>
    <property type="match status" value="1"/>
</dbReference>
<dbReference type="InterPro" id="IPR008909">
    <property type="entry name" value="DALR_anticod-bd"/>
</dbReference>
<dbReference type="InterPro" id="IPR015944">
    <property type="entry name" value="Gly-tRNA-synth_bsu"/>
</dbReference>
<dbReference type="InterPro" id="IPR006194">
    <property type="entry name" value="Gly-tRNA-synth_heterodimer"/>
</dbReference>
<dbReference type="NCBIfam" id="TIGR00211">
    <property type="entry name" value="glyS"/>
    <property type="match status" value="1"/>
</dbReference>
<dbReference type="PANTHER" id="PTHR30075:SF2">
    <property type="entry name" value="GLYCINE--TRNA LIGASE, CHLOROPLASTIC_MITOCHONDRIAL 2"/>
    <property type="match status" value="1"/>
</dbReference>
<dbReference type="PANTHER" id="PTHR30075">
    <property type="entry name" value="GLYCYL-TRNA SYNTHETASE"/>
    <property type="match status" value="1"/>
</dbReference>
<dbReference type="Pfam" id="PF05746">
    <property type="entry name" value="DALR_1"/>
    <property type="match status" value="1"/>
</dbReference>
<dbReference type="Pfam" id="PF02092">
    <property type="entry name" value="tRNA_synt_2f"/>
    <property type="match status" value="1"/>
</dbReference>
<dbReference type="PRINTS" id="PR01045">
    <property type="entry name" value="TRNASYNTHGB"/>
</dbReference>
<dbReference type="SUPFAM" id="SSF109604">
    <property type="entry name" value="HD-domain/PDEase-like"/>
    <property type="match status" value="1"/>
</dbReference>
<dbReference type="PROSITE" id="PS50861">
    <property type="entry name" value="AA_TRNA_LIGASE_II_GLYAB"/>
    <property type="match status" value="1"/>
</dbReference>
<accession>Q82VB0</accession>
<reference key="1">
    <citation type="journal article" date="2003" name="J. Bacteriol.">
        <title>Complete genome sequence of the ammonia-oxidizing bacterium and obligate chemolithoautotroph Nitrosomonas europaea.</title>
        <authorList>
            <person name="Chain P."/>
            <person name="Lamerdin J.E."/>
            <person name="Larimer F.W."/>
            <person name="Regala W."/>
            <person name="Lao V."/>
            <person name="Land M.L."/>
            <person name="Hauser L."/>
            <person name="Hooper A.B."/>
            <person name="Klotz M.G."/>
            <person name="Norton J."/>
            <person name="Sayavedra-Soto L.A."/>
            <person name="Arciero D.M."/>
            <person name="Hommes N.G."/>
            <person name="Whittaker M.M."/>
            <person name="Arp D.J."/>
        </authorList>
    </citation>
    <scope>NUCLEOTIDE SEQUENCE [LARGE SCALE GENOMIC DNA]</scope>
    <source>
        <strain>ATCC 19718 / CIP 103999 / KCTC 2705 / NBRC 14298</strain>
    </source>
</reference>